<proteinExistence type="evidence at transcript level"/>
<evidence type="ECO:0000250" key="1">
    <source>
        <dbReference type="UniProtKB" id="Q6DBH0"/>
    </source>
</evidence>
<evidence type="ECO:0000255" key="2"/>
<evidence type="ECO:0000255" key="3">
    <source>
        <dbReference type="PROSITE-ProRule" id="PRU00175"/>
    </source>
</evidence>
<evidence type="ECO:0000269" key="4">
    <source>
    </source>
</evidence>
<evidence type="ECO:0000303" key="5">
    <source>
    </source>
</evidence>
<evidence type="ECO:0000305" key="6"/>
<evidence type="ECO:0000312" key="7">
    <source>
        <dbReference type="Araport" id="AT2G38185"/>
    </source>
</evidence>
<evidence type="ECO:0000312" key="8">
    <source>
        <dbReference type="EMBL" id="AAM14856.1"/>
    </source>
</evidence>
<name>APD1_ARATH</name>
<comment type="function">
    <text evidence="4">Involved in pollen mitosis II (PMII) regulation during male gametogenesis.</text>
</comment>
<comment type="catalytic activity">
    <reaction evidence="1">
        <text>S-ubiquitinyl-[E2 ubiquitin-conjugating enzyme]-L-cysteine + [acceptor protein]-L-lysine = [E2 ubiquitin-conjugating enzyme]-L-cysteine + N(6)-ubiquitinyl-[acceptor protein]-L-lysine.</text>
        <dbReference type="EC" id="2.3.2.27"/>
    </reaction>
</comment>
<comment type="pathway">
    <text evidence="1">Protein modification; protein ubiquitination.</text>
</comment>
<comment type="subcellular location">
    <subcellularLocation>
        <location evidence="4">Endomembrane system</location>
        <topology evidence="2">Multi-pass membrane protein</topology>
    </subcellularLocation>
    <subcellularLocation>
        <location evidence="4">Vacuole membrane</location>
        <topology evidence="2">Multi-pass membrane protein</topology>
    </subcellularLocation>
    <text evidence="4">Associated with intracellular membranes and in the tonoplast and endosomes in the germinating pollen tubes.</text>
</comment>
<comment type="alternative products">
    <event type="alternative splicing"/>
    <isoform>
        <id>Q0WS06-1</id>
        <name>1</name>
        <sequence type="displayed"/>
    </isoform>
    <isoform>
        <id>Q0WS06-2</id>
        <name>2</name>
        <sequence type="described" ref="VSP_060124 VSP_060125"/>
    </isoform>
    <isoform>
        <id>Q0WS06-3</id>
        <name>3</name>
        <sequence type="described" ref="VSP_060123"/>
    </isoform>
</comment>
<comment type="tissue specificity">
    <text evidence="4">Expressed in the shoot apical meristems (SAM), root tips and inflorescences, and, at low levels, in floral buds and pollen.</text>
</comment>
<comment type="developmental stage">
    <text evidence="4">In young seedlings, expressed in the shoot apical meristem (SAM) and in root tips (PubMed:22897245). In inflorescence, highly observed in the pistil and in seeds, but weakly present during male gametogenesis (PubMed:22897245). Observed at very weak levels from the late bicellular pollen stage to the mature pollen stage (PubMed:22897245). Detected in the germinating pollen tubes (PubMed:22897245).</text>
</comment>
<comment type="disruption phenotype">
    <text evidence="4">No obvious defects during the vegetative developmental stage (PubMed:22897245). The double mutant lacking both APD1 and APD2 exhibits an increased percentage of bicellular-like pollen at the mature pollen stage (PubMed:22897245). Plants lacking APD1, APD2, APD3 and APD4 are defective for cell division in male gametogenesis resulting in severe abnormal bicellular-like pollen phenotypes (PubMed:22897245).</text>
</comment>
<sequence length="441" mass="49058">MDSAPSPSSLDFELSPPVLVTMTSTSSSASDNVEGADDDANTHGIFNWRDFSSCWRVSESNLYCFSLALLIWFFASFILIENLYGPKNVWLGPSSSILVEPSSIFVKSIKVKVLDYSEPGLQLYGFYRTPALDCFVNWSESRVLSISHESYKGWPYYLNSGSLLNITYTVKPQGSAVQLVVDEGHQGVPQSVLNDPAYRYNVWSWNLIEGSGMIQLEIRKSSSYYLAVANLKSKDVEVELNIDVKAVLYDTKQSFYNCNFSNGECTFNAMSLVGNSVVVTSPAASQGVSIEDEWYIRFSYQPREIAYVIGTGVVICFMLVAIQFCNRFQCSGGEGHLTEDDSARTRLLADKDDDGSSMGSCDDSYANDDADLEEFMGNDGEASNRSRRLCAICFDVPRDCFFLPCGHSVSCYECGTTMQEADGSCPICRRKMKKVKRIYTV</sequence>
<gene>
    <name evidence="5" type="primary">APD1</name>
    <name evidence="7" type="ordered locus">At2g38185</name>
    <name evidence="8" type="ORF">F16M14</name>
</gene>
<reference key="1">
    <citation type="journal article" date="1999" name="Nature">
        <title>Sequence and analysis of chromosome 2 of the plant Arabidopsis thaliana.</title>
        <authorList>
            <person name="Lin X."/>
            <person name="Kaul S."/>
            <person name="Rounsley S.D."/>
            <person name="Shea T.P."/>
            <person name="Benito M.-I."/>
            <person name="Town C.D."/>
            <person name="Fujii C.Y."/>
            <person name="Mason T.M."/>
            <person name="Bowman C.L."/>
            <person name="Barnstead M.E."/>
            <person name="Feldblyum T.V."/>
            <person name="Buell C.R."/>
            <person name="Ketchum K.A."/>
            <person name="Lee J.J."/>
            <person name="Ronning C.M."/>
            <person name="Koo H.L."/>
            <person name="Moffat K.S."/>
            <person name="Cronin L.A."/>
            <person name="Shen M."/>
            <person name="Pai G."/>
            <person name="Van Aken S."/>
            <person name="Umayam L."/>
            <person name="Tallon L.J."/>
            <person name="Gill J.E."/>
            <person name="Adams M.D."/>
            <person name="Carrera A.J."/>
            <person name="Creasy T.H."/>
            <person name="Goodman H.M."/>
            <person name="Somerville C.R."/>
            <person name="Copenhaver G.P."/>
            <person name="Preuss D."/>
            <person name="Nierman W.C."/>
            <person name="White O."/>
            <person name="Eisen J.A."/>
            <person name="Salzberg S.L."/>
            <person name="Fraser C.M."/>
            <person name="Venter J.C."/>
        </authorList>
    </citation>
    <scope>NUCLEOTIDE SEQUENCE [LARGE SCALE GENOMIC DNA]</scope>
    <source>
        <strain>cv. Columbia</strain>
    </source>
</reference>
<reference key="2">
    <citation type="journal article" date="2017" name="Plant J.">
        <title>Araport11: a complete reannotation of the Arabidopsis thaliana reference genome.</title>
        <authorList>
            <person name="Cheng C.Y."/>
            <person name="Krishnakumar V."/>
            <person name="Chan A.P."/>
            <person name="Thibaud-Nissen F."/>
            <person name="Schobel S."/>
            <person name="Town C.D."/>
        </authorList>
    </citation>
    <scope>GENOME REANNOTATION</scope>
    <source>
        <strain>cv. Columbia</strain>
    </source>
</reference>
<reference key="3">
    <citation type="submission" date="2006-07" db="EMBL/GenBank/DDBJ databases">
        <title>Large-scale analysis of RIKEN Arabidopsis full-length (RAFL) cDNAs.</title>
        <authorList>
            <person name="Totoki Y."/>
            <person name="Seki M."/>
            <person name="Ishida J."/>
            <person name="Nakajima M."/>
            <person name="Enju A."/>
            <person name="Kamiya A."/>
            <person name="Narusaka M."/>
            <person name="Shin-i T."/>
            <person name="Nakagawa M."/>
            <person name="Sakamoto N."/>
            <person name="Oishi K."/>
            <person name="Kohara Y."/>
            <person name="Kobayashi M."/>
            <person name="Toyoda A."/>
            <person name="Sakaki Y."/>
            <person name="Sakurai T."/>
            <person name="Iida K."/>
            <person name="Akiyama K."/>
            <person name="Satou M."/>
            <person name="Toyoda T."/>
            <person name="Konagaya A."/>
            <person name="Carninci P."/>
            <person name="Kawai J."/>
            <person name="Hayashizaki Y."/>
            <person name="Shinozaki K."/>
        </authorList>
    </citation>
    <scope>NUCLEOTIDE SEQUENCE [LARGE SCALE MRNA] (ISOFORM 1)</scope>
    <source>
        <strain>cv. Columbia</strain>
    </source>
</reference>
<reference key="4">
    <citation type="submission" date="2002-03" db="EMBL/GenBank/DDBJ databases">
        <title>Full-length cDNA from Arabidopsis thaliana.</title>
        <authorList>
            <person name="Brover V.V."/>
            <person name="Troukhan M.E."/>
            <person name="Alexandrov N.A."/>
            <person name="Lu Y.-P."/>
            <person name="Flavell R.B."/>
            <person name="Feldmann K.A."/>
        </authorList>
    </citation>
    <scope>NUCLEOTIDE SEQUENCE [LARGE SCALE MRNA] (ISOFORM 2)</scope>
</reference>
<reference key="5">
    <citation type="journal article" date="2012" name="J. Integr. Plant Biol.">
        <title>Four closely-related RING-type E3 ligases, APD1-4, are involved in pollen mitosis II regulation in Arabidopsis.</title>
        <authorList>
            <person name="Luo G."/>
            <person name="Gu H."/>
            <person name="Liu J."/>
            <person name="Qu L.-J."/>
        </authorList>
    </citation>
    <scope>FUNCTION</scope>
    <scope>DISRUPTION PHENOTYPE</scope>
    <scope>SUBCELLULAR LOCATION</scope>
    <scope>TISSUE SPECIFICITY</scope>
    <scope>DEVELOPMENTAL STAGE</scope>
    <scope>GENE FAMILY</scope>
    <scope>NOMENCLATURE</scope>
    <source>
        <strain>cv. Columbia</strain>
    </source>
</reference>
<feature type="chain" id="PRO_0000446984" description="E3 ubiquitin-protein ligase APD1">
    <location>
        <begin position="1"/>
        <end position="441"/>
    </location>
</feature>
<feature type="transmembrane region" description="Helical" evidence="2">
    <location>
        <begin position="60"/>
        <end position="80"/>
    </location>
</feature>
<feature type="transmembrane region" description="Helical" evidence="2">
    <location>
        <begin position="305"/>
        <end position="325"/>
    </location>
</feature>
<feature type="zinc finger region" description="RING-type" evidence="3">
    <location>
        <begin position="390"/>
        <end position="429"/>
    </location>
</feature>
<feature type="splice variant" id="VSP_060123" description="In isoform 3.">
    <original>MDSAPSPSSLDFELSPPVLVTMTSTSSSASDNVEGADDDANTHGIFNWRDFSSCWRVSESNLYCFSLALLIWFFASFILIENLYGPKNVWLGPSSSILVEPSSIFVKSIKVKVLDYSEPGLQLYGFYRTPALDCFVNWSESRVLSISHESYKGWPYYLN</original>
    <variation>MSGLDPVRQFLLNQALFLSKALRLKCLITQNQGFSFMGSIELLLWIVLSTGLNPECYLSHMNLT</variation>
    <location>
        <begin position="1"/>
        <end position="159"/>
    </location>
</feature>
<feature type="splice variant" id="VSP_060124" description="In isoform 2.">
    <original>GWPYYLNSGSLLNITYTVKPQGSAVQLVVDEGHQGVPQSVL</original>
    <variation>VALRFSVLFSLKCIYGWFLNFMRTFIVLIRSVVFVYFTLIF</variation>
    <location>
        <begin position="153"/>
        <end position="193"/>
    </location>
</feature>
<feature type="splice variant" id="VSP_060125" description="In isoform 2.">
    <location>
        <begin position="194"/>
        <end position="441"/>
    </location>
</feature>
<accession>Q0WS06</accession>
<accession>F4IS11</accession>
<accession>Q8S8T1</accession>
<protein>
    <recommendedName>
        <fullName evidence="6">E3 ubiquitin-protein ligase APD1</fullName>
        <ecNumber evidence="1">2.3.2.27</ecNumber>
    </recommendedName>
    <alternativeName>
        <fullName evidence="5">Protein ABERRANT POLLEN DEVELOPMENT 1</fullName>
    </alternativeName>
</protein>
<dbReference type="EC" id="2.3.2.27" evidence="1"/>
<dbReference type="EMBL" id="AC003028">
    <property type="protein sequence ID" value="AAM14856.1"/>
    <property type="molecule type" value="Genomic_DNA"/>
</dbReference>
<dbReference type="EMBL" id="CP002685">
    <property type="protein sequence ID" value="AEC09503.1"/>
    <property type="molecule type" value="Genomic_DNA"/>
</dbReference>
<dbReference type="EMBL" id="CP002685">
    <property type="protein sequence ID" value="AEC09504.1"/>
    <property type="molecule type" value="Genomic_DNA"/>
</dbReference>
<dbReference type="EMBL" id="CP002685">
    <property type="protein sequence ID" value="AEC09505.1"/>
    <property type="molecule type" value="Genomic_DNA"/>
</dbReference>
<dbReference type="EMBL" id="AK228136">
    <property type="protein sequence ID" value="BAF00093.1"/>
    <property type="molecule type" value="mRNA"/>
</dbReference>
<dbReference type="EMBL" id="AY086581">
    <property type="protein sequence ID" value="AAM63643.1"/>
    <property type="molecule type" value="mRNA"/>
</dbReference>
<dbReference type="RefSeq" id="NP_565884.2">
    <molecule id="Q0WS06-1"/>
    <property type="nucleotide sequence ID" value="NM_129375.3"/>
</dbReference>
<dbReference type="RefSeq" id="NP_973631.1">
    <molecule id="Q0WS06-1"/>
    <property type="nucleotide sequence ID" value="NM_201902.4"/>
</dbReference>
<dbReference type="RefSeq" id="NP_973632.1">
    <molecule id="Q0WS06-3"/>
    <property type="nucleotide sequence ID" value="NM_201903.2"/>
</dbReference>
<dbReference type="SMR" id="Q0WS06"/>
<dbReference type="FunCoup" id="Q0WS06">
    <property type="interactions" value="2"/>
</dbReference>
<dbReference type="STRING" id="3702.Q0WS06"/>
<dbReference type="iPTMnet" id="Q0WS06"/>
<dbReference type="PaxDb" id="3702-AT2G38185.4"/>
<dbReference type="ProteomicsDB" id="191193">
    <molecule id="Q0WS06-1"/>
</dbReference>
<dbReference type="ProteomicsDB" id="206360"/>
<dbReference type="EnsemblPlants" id="AT2G38185.1">
    <molecule id="Q0WS06-1"/>
    <property type="protein sequence ID" value="AT2G38185.1"/>
    <property type="gene ID" value="AT2G38185"/>
</dbReference>
<dbReference type="EnsemblPlants" id="AT2G38185.2">
    <molecule id="Q0WS06-1"/>
    <property type="protein sequence ID" value="AT2G38185.2"/>
    <property type="gene ID" value="AT2G38185"/>
</dbReference>
<dbReference type="EnsemblPlants" id="AT2G38185.3">
    <molecule id="Q0WS06-3"/>
    <property type="protein sequence ID" value="AT2G38185.3"/>
    <property type="gene ID" value="AT2G38185"/>
</dbReference>
<dbReference type="GeneID" id="818397"/>
<dbReference type="Gramene" id="AT2G38185.1">
    <molecule id="Q0WS06-1"/>
    <property type="protein sequence ID" value="AT2G38185.1"/>
    <property type="gene ID" value="AT2G38185"/>
</dbReference>
<dbReference type="Gramene" id="AT2G38185.2">
    <molecule id="Q0WS06-1"/>
    <property type="protein sequence ID" value="AT2G38185.2"/>
    <property type="gene ID" value="AT2G38185"/>
</dbReference>
<dbReference type="Gramene" id="AT2G38185.3">
    <molecule id="Q0WS06-3"/>
    <property type="protein sequence ID" value="AT2G38185.3"/>
    <property type="gene ID" value="AT2G38185"/>
</dbReference>
<dbReference type="KEGG" id="ath:AT2G38185"/>
<dbReference type="Araport" id="AT2G38185"/>
<dbReference type="TAIR" id="AT2G38185">
    <property type="gene designation" value="APD1"/>
</dbReference>
<dbReference type="InParanoid" id="Q0WS06"/>
<dbReference type="PhylomeDB" id="Q0WS06"/>
<dbReference type="UniPathway" id="UPA00143"/>
<dbReference type="PRO" id="PR:Q0WS06"/>
<dbReference type="Proteomes" id="UP000006548">
    <property type="component" value="Chromosome 2"/>
</dbReference>
<dbReference type="ExpressionAtlas" id="Q0WS06">
    <property type="expression patterns" value="baseline and differential"/>
</dbReference>
<dbReference type="GO" id="GO:0005768">
    <property type="term" value="C:endosome"/>
    <property type="evidence" value="ECO:0000314"/>
    <property type="project" value="UniProtKB"/>
</dbReference>
<dbReference type="GO" id="GO:0009705">
    <property type="term" value="C:plant-type vacuole membrane"/>
    <property type="evidence" value="ECO:0000314"/>
    <property type="project" value="UniProtKB"/>
</dbReference>
<dbReference type="GO" id="GO:0016740">
    <property type="term" value="F:transferase activity"/>
    <property type="evidence" value="ECO:0007669"/>
    <property type="project" value="UniProtKB-KW"/>
</dbReference>
<dbReference type="GO" id="GO:0008270">
    <property type="term" value="F:zinc ion binding"/>
    <property type="evidence" value="ECO:0007669"/>
    <property type="project" value="UniProtKB-KW"/>
</dbReference>
<dbReference type="GO" id="GO:0000278">
    <property type="term" value="P:mitotic cell cycle"/>
    <property type="evidence" value="ECO:0000315"/>
    <property type="project" value="UniProtKB"/>
</dbReference>
<dbReference type="GO" id="GO:0009555">
    <property type="term" value="P:pollen development"/>
    <property type="evidence" value="ECO:0000315"/>
    <property type="project" value="UniProtKB"/>
</dbReference>
<dbReference type="GO" id="GO:0016567">
    <property type="term" value="P:protein ubiquitination"/>
    <property type="evidence" value="ECO:0007669"/>
    <property type="project" value="UniProtKB-UniPathway"/>
</dbReference>
<dbReference type="FunFam" id="3.30.40.10:FF:000658">
    <property type="entry name" value="E3 ubiquitin-protein ligase APD2"/>
    <property type="match status" value="1"/>
</dbReference>
<dbReference type="Gene3D" id="3.30.40.10">
    <property type="entry name" value="Zinc/RING finger domain, C3HC4 (zinc finger)"/>
    <property type="match status" value="1"/>
</dbReference>
<dbReference type="InterPro" id="IPR032010">
    <property type="entry name" value="APD1-4_M"/>
</dbReference>
<dbReference type="InterPro" id="IPR032008">
    <property type="entry name" value="APD1-4_N"/>
</dbReference>
<dbReference type="InterPro" id="IPR001841">
    <property type="entry name" value="Znf_RING"/>
</dbReference>
<dbReference type="InterPro" id="IPR013083">
    <property type="entry name" value="Znf_RING/FYVE/PHD"/>
</dbReference>
<dbReference type="PANTHER" id="PTHR46858:SF5">
    <property type="entry name" value="E3 UBIQUITIN-PROTEIN LIGASE APD1-RELATED"/>
    <property type="match status" value="1"/>
</dbReference>
<dbReference type="PANTHER" id="PTHR46858">
    <property type="entry name" value="OS05G0521000 PROTEIN"/>
    <property type="match status" value="1"/>
</dbReference>
<dbReference type="Pfam" id="PF16041">
    <property type="entry name" value="APD1-4_M"/>
    <property type="match status" value="1"/>
</dbReference>
<dbReference type="Pfam" id="PF16040">
    <property type="entry name" value="APD1-4_N"/>
    <property type="match status" value="1"/>
</dbReference>
<dbReference type="Pfam" id="PF13920">
    <property type="entry name" value="zf-C3HC4_3"/>
    <property type="match status" value="1"/>
</dbReference>
<dbReference type="SMART" id="SM00184">
    <property type="entry name" value="RING"/>
    <property type="match status" value="1"/>
</dbReference>
<dbReference type="SUPFAM" id="SSF57850">
    <property type="entry name" value="RING/U-box"/>
    <property type="match status" value="1"/>
</dbReference>
<dbReference type="PROSITE" id="PS50089">
    <property type="entry name" value="ZF_RING_2"/>
    <property type="match status" value="1"/>
</dbReference>
<organism>
    <name type="scientific">Arabidopsis thaliana</name>
    <name type="common">Mouse-ear cress</name>
    <dbReference type="NCBI Taxonomy" id="3702"/>
    <lineage>
        <taxon>Eukaryota</taxon>
        <taxon>Viridiplantae</taxon>
        <taxon>Streptophyta</taxon>
        <taxon>Embryophyta</taxon>
        <taxon>Tracheophyta</taxon>
        <taxon>Spermatophyta</taxon>
        <taxon>Magnoliopsida</taxon>
        <taxon>eudicotyledons</taxon>
        <taxon>Gunneridae</taxon>
        <taxon>Pentapetalae</taxon>
        <taxon>rosids</taxon>
        <taxon>malvids</taxon>
        <taxon>Brassicales</taxon>
        <taxon>Brassicaceae</taxon>
        <taxon>Camelineae</taxon>
        <taxon>Arabidopsis</taxon>
    </lineage>
</organism>
<keyword id="KW-0025">Alternative splicing</keyword>
<keyword id="KW-0472">Membrane</keyword>
<keyword id="KW-0479">Metal-binding</keyword>
<keyword id="KW-1185">Reference proteome</keyword>
<keyword id="KW-0808">Transferase</keyword>
<keyword id="KW-0812">Transmembrane</keyword>
<keyword id="KW-1133">Transmembrane helix</keyword>
<keyword id="KW-0833">Ubl conjugation pathway</keyword>
<keyword id="KW-0926">Vacuole</keyword>
<keyword id="KW-0862">Zinc</keyword>
<keyword id="KW-0863">Zinc-finger</keyword>